<keyword id="KW-0067">ATP-binding</keyword>
<keyword id="KW-0347">Helicase</keyword>
<keyword id="KW-0378">Hydrolase</keyword>
<keyword id="KW-0547">Nucleotide-binding</keyword>
<keyword id="KW-1185">Reference proteome</keyword>
<protein>
    <recommendedName>
        <fullName>Putative helicase 172L</fullName>
        <ecNumber>3.6.4.-</ecNumber>
    </recommendedName>
</protein>
<accession>O55764</accession>
<accession>Q89442</accession>
<reference key="1">
    <citation type="journal article" date="2001" name="Virology">
        <title>Analysis of the first complete DNA sequence of an invertebrate iridovirus: coding strategy of the genome of Chilo iridescent virus.</title>
        <authorList>
            <person name="Jakob N.J."/>
            <person name="Mueller K."/>
            <person name="Bahr U."/>
            <person name="Darai G."/>
        </authorList>
    </citation>
    <scope>NUCLEOTIDE SEQUENCE [LARGE SCALE GENOMIC DNA]</scope>
</reference>
<reference key="2">
    <citation type="journal article" date="1994" name="Intervirology">
        <title>Identification of the primary structure and the coding capacity of the genome of insect iridescent virus type 6 between the genome coordinates 0.310 and 0.347 (7990 bp).</title>
        <authorList>
            <person name="Sonntag K.-C."/>
            <person name="Schnitzler P."/>
            <person name="Janssen W."/>
            <person name="Darai G."/>
        </authorList>
    </citation>
    <scope>NUCLEOTIDE SEQUENCE [GENOMIC DNA]</scope>
</reference>
<reference key="3">
    <citation type="journal article" date="2007" name="Virol. J.">
        <title>Comparative genomic analysis of the family Iridoviridae: re-annotating and defining the core set of iridovirus genes.</title>
        <authorList>
            <person name="Eaton H.E."/>
            <person name="Metcalf J."/>
            <person name="Penny E."/>
            <person name="Tcherepanov V."/>
            <person name="Upton C."/>
            <person name="Brunetti C.R."/>
        </authorList>
    </citation>
    <scope>GENOME REANNOTATION</scope>
</reference>
<organism>
    <name type="scientific">Invertebrate iridescent virus 6</name>
    <name type="common">IIV-6</name>
    <name type="synonym">Chilo iridescent virus</name>
    <dbReference type="NCBI Taxonomy" id="176652"/>
    <lineage>
        <taxon>Viruses</taxon>
        <taxon>Varidnaviria</taxon>
        <taxon>Bamfordvirae</taxon>
        <taxon>Nucleocytoviricota</taxon>
        <taxon>Megaviricetes</taxon>
        <taxon>Pimascovirales</taxon>
        <taxon>Iridoviridae</taxon>
        <taxon>Betairidovirinae</taxon>
        <taxon>Iridovirus</taxon>
    </lineage>
</organism>
<dbReference type="EC" id="3.6.4.-"/>
<dbReference type="EMBL" id="AF303741">
    <property type="protein sequence ID" value="AAA62412.2"/>
    <property type="molecule type" value="Genomic_DNA"/>
</dbReference>
<dbReference type="EMBL" id="S75674">
    <property type="protein sequence ID" value="AAB33905.1"/>
    <property type="molecule type" value="Genomic_DNA"/>
</dbReference>
<dbReference type="PIR" id="T03177">
    <property type="entry name" value="T03177"/>
</dbReference>
<dbReference type="RefSeq" id="NP_149635.1">
    <property type="nucleotide sequence ID" value="NC_003038.1"/>
</dbReference>
<dbReference type="SMR" id="O55764"/>
<dbReference type="KEGG" id="vg:1732980"/>
<dbReference type="OrthoDB" id="14511at10239"/>
<dbReference type="Proteomes" id="UP000001359">
    <property type="component" value="Genome"/>
</dbReference>
<dbReference type="GO" id="GO:0005524">
    <property type="term" value="F:ATP binding"/>
    <property type="evidence" value="ECO:0007669"/>
    <property type="project" value="UniProtKB-KW"/>
</dbReference>
<dbReference type="GO" id="GO:0008094">
    <property type="term" value="F:ATP-dependent activity, acting on DNA"/>
    <property type="evidence" value="ECO:0007669"/>
    <property type="project" value="TreeGrafter"/>
</dbReference>
<dbReference type="GO" id="GO:0004386">
    <property type="term" value="F:helicase activity"/>
    <property type="evidence" value="ECO:0007669"/>
    <property type="project" value="UniProtKB-KW"/>
</dbReference>
<dbReference type="GO" id="GO:0016787">
    <property type="term" value="F:hydrolase activity"/>
    <property type="evidence" value="ECO:0007669"/>
    <property type="project" value="UniProtKB-KW"/>
</dbReference>
<dbReference type="GO" id="GO:0006281">
    <property type="term" value="P:DNA repair"/>
    <property type="evidence" value="ECO:0007669"/>
    <property type="project" value="TreeGrafter"/>
</dbReference>
<dbReference type="CDD" id="cd18793">
    <property type="entry name" value="SF2_C_SNF"/>
    <property type="match status" value="1"/>
</dbReference>
<dbReference type="Gene3D" id="3.40.50.300">
    <property type="entry name" value="P-loop containing nucleotide triphosphate hydrolases"/>
    <property type="match status" value="1"/>
</dbReference>
<dbReference type="Gene3D" id="3.40.50.10810">
    <property type="entry name" value="Tandem AAA-ATPase domain"/>
    <property type="match status" value="1"/>
</dbReference>
<dbReference type="InterPro" id="IPR014001">
    <property type="entry name" value="Helicase_ATP-bd"/>
</dbReference>
<dbReference type="InterPro" id="IPR001650">
    <property type="entry name" value="Helicase_C-like"/>
</dbReference>
<dbReference type="InterPro" id="IPR027417">
    <property type="entry name" value="P-loop_NTPase"/>
</dbReference>
<dbReference type="InterPro" id="IPR038718">
    <property type="entry name" value="SNF2-like_sf"/>
</dbReference>
<dbReference type="InterPro" id="IPR049730">
    <property type="entry name" value="SNF2/RAD54-like_C"/>
</dbReference>
<dbReference type="InterPro" id="IPR000330">
    <property type="entry name" value="SNF2_N"/>
</dbReference>
<dbReference type="InterPro" id="IPR050628">
    <property type="entry name" value="SNF2_RAD54_helicase_TF"/>
</dbReference>
<dbReference type="PANTHER" id="PTHR45626:SF17">
    <property type="entry name" value="HELICASE-LIKE TRANSCRIPTION FACTOR"/>
    <property type="match status" value="1"/>
</dbReference>
<dbReference type="PANTHER" id="PTHR45626">
    <property type="entry name" value="TRANSCRIPTION TERMINATION FACTOR 2-RELATED"/>
    <property type="match status" value="1"/>
</dbReference>
<dbReference type="Pfam" id="PF00271">
    <property type="entry name" value="Helicase_C"/>
    <property type="match status" value="1"/>
</dbReference>
<dbReference type="Pfam" id="PF00176">
    <property type="entry name" value="SNF2-rel_dom"/>
    <property type="match status" value="1"/>
</dbReference>
<dbReference type="SMART" id="SM00487">
    <property type="entry name" value="DEXDc"/>
    <property type="match status" value="1"/>
</dbReference>
<dbReference type="SMART" id="SM00490">
    <property type="entry name" value="HELICc"/>
    <property type="match status" value="1"/>
</dbReference>
<dbReference type="SUPFAM" id="SSF52540">
    <property type="entry name" value="P-loop containing nucleoside triphosphate hydrolases"/>
    <property type="match status" value="2"/>
</dbReference>
<dbReference type="PROSITE" id="PS51192">
    <property type="entry name" value="HELICASE_ATP_BIND_1"/>
    <property type="match status" value="1"/>
</dbReference>
<dbReference type="PROSITE" id="PS51194">
    <property type="entry name" value="HELICASE_CTER"/>
    <property type="match status" value="1"/>
</dbReference>
<proteinExistence type="inferred from homology"/>
<feature type="chain" id="PRO_0000378036" description="Putative helicase 172L">
    <location>
        <begin position="1"/>
        <end position="606"/>
    </location>
</feature>
<feature type="domain" description="Helicase ATP-binding" evidence="1">
    <location>
        <begin position="59"/>
        <end position="264"/>
    </location>
</feature>
<feature type="domain" description="Helicase C-terminal" evidence="2">
    <location>
        <begin position="437"/>
        <end position="586"/>
    </location>
</feature>
<feature type="binding site" evidence="1">
    <location>
        <begin position="72"/>
        <end position="79"/>
    </location>
    <ligand>
        <name>ATP</name>
        <dbReference type="ChEBI" id="CHEBI:30616"/>
    </ligand>
</feature>
<feature type="sequence variant">
    <original>RD</original>
    <variation>KS</variation>
    <location>
        <begin position="128"/>
        <end position="129"/>
    </location>
</feature>
<feature type="sequence variant">
    <original>S</original>
    <variation>M</variation>
    <location>
        <position position="446"/>
    </location>
</feature>
<name>172L_IIV6</name>
<evidence type="ECO:0000255" key="1">
    <source>
        <dbReference type="PROSITE-ProRule" id="PRU00541"/>
    </source>
</evidence>
<evidence type="ECO:0000255" key="2">
    <source>
        <dbReference type="PROSITE-ProRule" id="PRU00542"/>
    </source>
</evidence>
<evidence type="ECO:0000305" key="3"/>
<gene>
    <name type="ORF">IIV6-172L</name>
</gene>
<comment type="similarity">
    <text evidence="3">Belongs to the SNF2/RAD54 helicase family.</text>
</comment>
<organismHost>
    <name type="scientific">Acheta domesticus</name>
    <name type="common">House cricket</name>
    <dbReference type="NCBI Taxonomy" id="6997"/>
</organismHost>
<organismHost>
    <name type="scientific">Chilo suppressalis</name>
    <name type="common">Asiatic rice borer moth</name>
    <dbReference type="NCBI Taxonomy" id="168631"/>
</organismHost>
<organismHost>
    <name type="scientific">Gryllus bimaculatus</name>
    <name type="common">Two-spotted cricket</name>
    <dbReference type="NCBI Taxonomy" id="6999"/>
</organismHost>
<organismHost>
    <name type="scientific">Gryllus campestris</name>
    <dbReference type="NCBI Taxonomy" id="58607"/>
</organismHost>
<organismHost>
    <name type="scientific">Spodoptera frugiperda</name>
    <name type="common">Fall armyworm</name>
    <dbReference type="NCBI Taxonomy" id="7108"/>
</organismHost>
<sequence>MADAMNELCNLTQHLQVDDDQLSNLKLKNGYSLFPHQEKVMLWMKYRENLTKKECRKEGEKTWGVRGGIISLCMGLGKTLTALAYSFQNKASFPTLVITSKTVMHEWKTEGVEKFFDSDNIRVLYLHRDYIKNIDKISRDDIMTYDIVITTYDVCLFACKKGNYFLQCFEMGEEQSLMKNKIVAIHTRKRKDANLPNLKGTAVIYGTPWERVICDESQKFANPKTMTYKCIMAVYGKYKWCLTGTPIRNYETDIWAQLRFCGYKGVERSHDWNRNGQGLIAFKDHNLISAIFTMSYDDAQMSLPEKTENNLTVKLEGQHKEIYEGILTETREMYKKMMNDLCSFTYVLAMFTRLRQCAIAPYLITPDAKRNSKEKKNCSEWCLDKFGGAGIKSSKILKIVEIIKSVTLNDNPNCNSNPKSLQLLAKEKAYSCFGSDYIKSSNFEISHPTKIIVFSMFTSCLDLLSEAIKEDYPNFKFVQVDGDTKNRSELFDQFKNDINTQGLFLTYKVGSEGLNLTEATHCICIEPWWTNAVHNQAKARLWRTGQTKQVYVHNVIIEGSIEEKIVEICKGKDDMAASYLEGKERIKSPVRAPKLDKFTLGKMLGI</sequence>